<name>HYAS2_MOUSE</name>
<feature type="chain" id="PRO_0000197174" description="Hyaluronan synthase 2">
    <location>
        <begin position="1"/>
        <end position="552"/>
    </location>
</feature>
<feature type="topological domain" description="Cytoplasmic" evidence="2">
    <location>
        <begin position="1"/>
        <end position="11"/>
    </location>
</feature>
<feature type="transmembrane region" description="Helical; Name=1" evidence="2">
    <location>
        <begin position="12"/>
        <end position="32"/>
    </location>
</feature>
<feature type="topological domain" description="Extracellular" evidence="2">
    <location>
        <begin position="33"/>
        <end position="45"/>
    </location>
</feature>
<feature type="transmembrane region" description="Helical; Name=2" evidence="2">
    <location>
        <begin position="46"/>
        <end position="66"/>
    </location>
</feature>
<feature type="topological domain" description="Cytoplasmic" evidence="2">
    <location>
        <begin position="67"/>
        <end position="374"/>
    </location>
</feature>
<feature type="transmembrane region" description="Helical; Name=3" evidence="2">
    <location>
        <begin position="375"/>
        <end position="395"/>
    </location>
</feature>
<feature type="topological domain" description="Extracellular" evidence="2">
    <location>
        <begin position="396"/>
        <end position="402"/>
    </location>
</feature>
<feature type="transmembrane region" description="Helical; Name=4" evidence="2">
    <location>
        <begin position="403"/>
        <end position="423"/>
    </location>
</feature>
<feature type="topological domain" description="Cytoplasmic" evidence="2">
    <location>
        <begin position="424"/>
        <end position="429"/>
    </location>
</feature>
<feature type="transmembrane region" description="Helical; Name=5" evidence="2">
    <location>
        <begin position="430"/>
        <end position="450"/>
    </location>
</feature>
<feature type="topological domain" description="Extracellular" evidence="2">
    <location>
        <begin position="451"/>
        <end position="475"/>
    </location>
</feature>
<feature type="transmembrane region" description="Helical; Name=6" evidence="2">
    <location>
        <begin position="476"/>
        <end position="496"/>
    </location>
</feature>
<feature type="topological domain" description="Cytoplasmic" evidence="2">
    <location>
        <begin position="497"/>
        <end position="510"/>
    </location>
</feature>
<feature type="transmembrane region" description="Helical; Name=7" evidence="2">
    <location>
        <begin position="511"/>
        <end position="531"/>
    </location>
</feature>
<feature type="topological domain" description="Extracellular" evidence="2">
    <location>
        <begin position="532"/>
        <end position="552"/>
    </location>
</feature>
<feature type="modified residue" description="Phosphothreonine" evidence="1">
    <location>
        <position position="110"/>
    </location>
</feature>
<feature type="modified residue" description="Phosphothreonine" evidence="1">
    <location>
        <position position="328"/>
    </location>
</feature>
<feature type="glycosylation site" description="O-linked (GlcNAc) serine" evidence="1">
    <location>
        <position position="221"/>
    </location>
</feature>
<feature type="cross-link" description="Glycyl lysine isopeptide (Lys-Gly) (interchain with G-Cter in ubiquitin)" evidence="1">
    <location>
        <position position="190"/>
    </location>
</feature>
<feature type="sequence conflict" description="In Ref. 1; AAC53309." evidence="6" ref="1">
    <original>M</original>
    <variation>I</variation>
    <location>
        <position position="138"/>
    </location>
</feature>
<comment type="function">
    <text evidence="3 4">Catalyzes the addition of GlcNAc or GlcUA monosaccharides to the nascent hyaluronan polymer. Therefore, it is essential to hyaluronan synthesis a major component of most extracellular matrices that has a structural role in tissues architectures and regulates cell adhesion, migration and differentiation. This is one of the isozymes catalyzing that reaction and it is particularly responsible for the synthesis of high molecular mass hyaluronan (PubMed:10455188). Required for the transition of endocardial cushion cells into mesenchymal cells, a process crucial for heart development (PubMed:10930438). May also play a role in vasculogenesis. High molecular mass hyaluronan also play a role in early contact inhibition a process which stops cell growth when cells come into contact with each other or the extracellular matrix.</text>
</comment>
<comment type="function">
    <text evidence="1 3">Catalyzes the addition of GlcNAc or GlcUA monosaccharides to the nascent hyaluronan polymer. Therefore, it is essential to hyaluronan synthesis a major component of most extracellular matrices that has a structural role in tissues architectures and regulates cell adhesion, migration and differentiation (By similarity). This is one of three isoenzymes responsible for cellular hyaluronan synthesis and it is particularly responsible for the synthesis of high molecular mass hyaluronan (PubMed:10455188).</text>
</comment>
<comment type="catalytic activity">
    <reaction evidence="3">
        <text>[hyaluronan](n) + UDP-N-acetyl-alpha-D-glucosamine = N-acetyl-beta-D-glucosaminyl-(1-&gt;4)-[hyaluronan](n) + UDP + H(+)</text>
        <dbReference type="Rhea" id="RHEA:20465"/>
        <dbReference type="Rhea" id="RHEA-COMP:12583"/>
        <dbReference type="Rhea" id="RHEA-COMP:12585"/>
        <dbReference type="ChEBI" id="CHEBI:15378"/>
        <dbReference type="ChEBI" id="CHEBI:57705"/>
        <dbReference type="ChEBI" id="CHEBI:58223"/>
        <dbReference type="ChEBI" id="CHEBI:132153"/>
        <dbReference type="ChEBI" id="CHEBI:132154"/>
        <dbReference type="EC" id="2.4.1.212"/>
    </reaction>
    <physiologicalReaction direction="left-to-right" evidence="7">
        <dbReference type="Rhea" id="RHEA:20466"/>
    </physiologicalReaction>
</comment>
<comment type="catalytic activity">
    <reaction evidence="3">
        <text>N-acetyl-beta-D-glucosaminyl-(1-&gt;4)-[hyaluronan](n) + UDP-alpha-D-glucuronate = [hyaluronan](n+1) + UDP + H(+)</text>
        <dbReference type="Rhea" id="RHEA:12528"/>
        <dbReference type="Rhea" id="RHEA-COMP:12585"/>
        <dbReference type="Rhea" id="RHEA-COMP:12587"/>
        <dbReference type="ChEBI" id="CHEBI:15378"/>
        <dbReference type="ChEBI" id="CHEBI:58052"/>
        <dbReference type="ChEBI" id="CHEBI:58223"/>
        <dbReference type="ChEBI" id="CHEBI:132153"/>
        <dbReference type="ChEBI" id="CHEBI:132154"/>
        <dbReference type="EC" id="2.4.1.212"/>
    </reaction>
    <physiologicalReaction direction="left-to-right" evidence="7">
        <dbReference type="Rhea" id="RHEA:12529"/>
    </physiologicalReaction>
</comment>
<comment type="cofactor">
    <cofactor>
        <name>Mg(2+)</name>
        <dbReference type="ChEBI" id="CHEBI:18420"/>
    </cofactor>
</comment>
<comment type="biophysicochemical properties">
    <kinetics>
        <KM evidence="3">0.2 mM for UDP-Glc-NAc (at pH 7.1 and 37 degrees Celsius, in the presence of 15 mM MgCl2)</KM>
        <KM evidence="3">0.3 mM for UDP-Glc-UA (at pH 7.1 and 37 degrees Celsius, in the presence of 15 mM MgCl2)</KM>
    </kinetics>
</comment>
<comment type="pathway">
    <text evidence="3">Glycan biosynthesis; hyaluronan biosynthesis.</text>
</comment>
<comment type="subunit">
    <text evidence="1">Homodimer; dimerization promotes enzymatic activity. Forms heterodimer with HAS3. Forms heterodimer with HAS1.</text>
</comment>
<comment type="subcellular location">
    <subcellularLocation>
        <location evidence="1">Cell membrane</location>
        <topology evidence="2">Multi-pass membrane protein</topology>
    </subcellularLocation>
    <subcellularLocation>
        <location evidence="1">Endoplasmic reticulum membrane</location>
        <topology evidence="2">Multi-pass membrane protein</topology>
    </subcellularLocation>
    <subcellularLocation>
        <location evidence="1">Vesicle</location>
    </subcellularLocation>
    <subcellularLocation>
        <location evidence="1">Golgi apparatus membrane</location>
        <topology evidence="2">Multi-pass membrane protein</topology>
    </subcellularLocation>
    <subcellularLocation>
        <location evidence="1">Lysosome</location>
    </subcellularLocation>
    <text evidence="1">Travels from endoplasmic reticulum (ER), Golgi to plasma membrane and either back to endosomes and lysosomes, or out into extracellular vesicles. Post-translational modifications control HAS2 trafficking.</text>
</comment>
<comment type="tissue specificity">
    <text evidence="5">Expressed in heart, brain, spleen, lung and skeletal muscle.</text>
</comment>
<comment type="developmental stage">
    <text evidence="4">Detected from 7.5 dpc through birth. At 8.5 dpc, predominantly expressed in the epithelium of the foregut diverticulum, the cephalic mesenchyme, the allantois, and in the myocardium and endocardium of the heart. At 9.5 dpc, prominent expression is detected in cephalic, foregut and periaortic mesenchymes, the septum transversum and the cardiovascular system. Also present in the atrial and ventricular endothelium and the myocardium of the atrioventricular canal region. By 10.5 dpc, highly expressed in endothelial cells in the atrioventricular canal and outflow tract that transform into mesenchymal cells and invade the underlying matrix. Later, expressed by mesenchymal cells during elevation of the secondary palate and by hypertrophic chondrocytes within epiphysial growth plates.</text>
</comment>
<comment type="PTM">
    <text evidence="1">Phosphorylation at Thr-328 is essential for hyaluronan synthase activity.</text>
</comment>
<comment type="PTM">
    <text evidence="1">O-GlcNAcylation at Ser-221 increases the stability of HAS2 and plasma membrane localization.</text>
</comment>
<comment type="PTM">
    <text evidence="1">Ubiquitination at Lys-190; this ubiquitination is essential for hyaluronan synthase activity and homo- or hetero-oligomerization. Can also be poly-ubiquitinated. Deubiquitinated by USP17L22/USP17 and USP4. USP17L22/USP17 efficiently removes 'Lys-63'- and 'Lys-48'-linked polyubiquitin chains, whereas USP4 preferentially removes monoubiquitination and, partially, both 'Lys-63'- and 'Lys-48'-linked polyubiquitin chain.</text>
</comment>
<comment type="disruption phenotype">
    <text evidence="4">Embryonic lethal. At day 9.5 dpc, the distribution of homozygous embryos approaches Mendelian frequency while only occasional viable embryos were found at 10.5 dpc. Embryos exhibited growth retardation, scant numbers of red blood cells, and lacked vitelline vessels in the yolk sac. The visceral endoderm and mesoderm forming the yolk sac was not fused except at discrete foci. The heart was thinwalled and relatively bloodless, and often exhibited marked pericardial swelling. The heart lacks cardiac jelly, endocardial cushions and trabeculae. A marked reduction in vessels in homozygous embryos is also observed. Somites were present but distorted. Some of the 9.5 dpc embryos had failed to turn, and exhibited posterior defects as well as cephalic mesenchyme abnormalities.</text>
</comment>
<comment type="similarity">
    <text evidence="6">Belongs to the NodC/HAS family.</text>
</comment>
<comment type="online information" name="Protein Spotlight">
    <link uri="https://www.proteinspotlight.org/back_issues/155/"/>
    <text>an unexpected turn of events - Issue 155 of December 2013</text>
</comment>
<reference key="1">
    <citation type="journal article" date="1996" name="J. Biol. Chem.">
        <title>Molecular cloning and characterization of a putative mouse hyaluronan synthase.</title>
        <authorList>
            <person name="Spicer A.P."/>
            <person name="Augustine M.L."/>
            <person name="McDonald J.A."/>
        </authorList>
    </citation>
    <scope>NUCLEOTIDE SEQUENCE [MRNA]</scope>
    <scope>TISSUE SPECIFICITY</scope>
    <source>
        <strain>C57BL/6J</strain>
    </source>
</reference>
<reference key="2">
    <citation type="submission" date="2000-02" db="EMBL/GenBank/DDBJ databases">
        <authorList>
            <person name="Spicer A.P."/>
            <person name="Augustine M.L."/>
            <person name="McDonald J.A."/>
        </authorList>
    </citation>
    <scope>SEQUENCE REVISION TO 138</scope>
</reference>
<reference key="3">
    <citation type="journal article" date="1997" name="Arch. Biochem. Biophys.">
        <title>Coding sequence of a hyaluronan synthase homologue expressed during expansion of the mouse cumulus-oocyte complex.</title>
        <authorList>
            <person name="Fueloep C."/>
            <person name="Salustri A."/>
            <person name="Hascall V.C."/>
        </authorList>
    </citation>
    <scope>NUCLEOTIDE SEQUENCE [MRNA]</scope>
    <source>
        <strain>CD-1</strain>
    </source>
</reference>
<reference key="4">
    <citation type="journal article" date="2005" name="Science">
        <title>The transcriptional landscape of the mammalian genome.</title>
        <authorList>
            <person name="Carninci P."/>
            <person name="Kasukawa T."/>
            <person name="Katayama S."/>
            <person name="Gough J."/>
            <person name="Frith M.C."/>
            <person name="Maeda N."/>
            <person name="Oyama R."/>
            <person name="Ravasi T."/>
            <person name="Lenhard B."/>
            <person name="Wells C."/>
            <person name="Kodzius R."/>
            <person name="Shimokawa K."/>
            <person name="Bajic V.B."/>
            <person name="Brenner S.E."/>
            <person name="Batalov S."/>
            <person name="Forrest A.R."/>
            <person name="Zavolan M."/>
            <person name="Davis M.J."/>
            <person name="Wilming L.G."/>
            <person name="Aidinis V."/>
            <person name="Allen J.E."/>
            <person name="Ambesi-Impiombato A."/>
            <person name="Apweiler R."/>
            <person name="Aturaliya R.N."/>
            <person name="Bailey T.L."/>
            <person name="Bansal M."/>
            <person name="Baxter L."/>
            <person name="Beisel K.W."/>
            <person name="Bersano T."/>
            <person name="Bono H."/>
            <person name="Chalk A.M."/>
            <person name="Chiu K.P."/>
            <person name="Choudhary V."/>
            <person name="Christoffels A."/>
            <person name="Clutterbuck D.R."/>
            <person name="Crowe M.L."/>
            <person name="Dalla E."/>
            <person name="Dalrymple B.P."/>
            <person name="de Bono B."/>
            <person name="Della Gatta G."/>
            <person name="di Bernardo D."/>
            <person name="Down T."/>
            <person name="Engstrom P."/>
            <person name="Fagiolini M."/>
            <person name="Faulkner G."/>
            <person name="Fletcher C.F."/>
            <person name="Fukushima T."/>
            <person name="Furuno M."/>
            <person name="Futaki S."/>
            <person name="Gariboldi M."/>
            <person name="Georgii-Hemming P."/>
            <person name="Gingeras T.R."/>
            <person name="Gojobori T."/>
            <person name="Green R.E."/>
            <person name="Gustincich S."/>
            <person name="Harbers M."/>
            <person name="Hayashi Y."/>
            <person name="Hensch T.K."/>
            <person name="Hirokawa N."/>
            <person name="Hill D."/>
            <person name="Huminiecki L."/>
            <person name="Iacono M."/>
            <person name="Ikeo K."/>
            <person name="Iwama A."/>
            <person name="Ishikawa T."/>
            <person name="Jakt M."/>
            <person name="Kanapin A."/>
            <person name="Katoh M."/>
            <person name="Kawasawa Y."/>
            <person name="Kelso J."/>
            <person name="Kitamura H."/>
            <person name="Kitano H."/>
            <person name="Kollias G."/>
            <person name="Krishnan S.P."/>
            <person name="Kruger A."/>
            <person name="Kummerfeld S.K."/>
            <person name="Kurochkin I.V."/>
            <person name="Lareau L.F."/>
            <person name="Lazarevic D."/>
            <person name="Lipovich L."/>
            <person name="Liu J."/>
            <person name="Liuni S."/>
            <person name="McWilliam S."/>
            <person name="Madan Babu M."/>
            <person name="Madera M."/>
            <person name="Marchionni L."/>
            <person name="Matsuda H."/>
            <person name="Matsuzawa S."/>
            <person name="Miki H."/>
            <person name="Mignone F."/>
            <person name="Miyake S."/>
            <person name="Morris K."/>
            <person name="Mottagui-Tabar S."/>
            <person name="Mulder N."/>
            <person name="Nakano N."/>
            <person name="Nakauchi H."/>
            <person name="Ng P."/>
            <person name="Nilsson R."/>
            <person name="Nishiguchi S."/>
            <person name="Nishikawa S."/>
            <person name="Nori F."/>
            <person name="Ohara O."/>
            <person name="Okazaki Y."/>
            <person name="Orlando V."/>
            <person name="Pang K.C."/>
            <person name="Pavan W.J."/>
            <person name="Pavesi G."/>
            <person name="Pesole G."/>
            <person name="Petrovsky N."/>
            <person name="Piazza S."/>
            <person name="Reed J."/>
            <person name="Reid J.F."/>
            <person name="Ring B.Z."/>
            <person name="Ringwald M."/>
            <person name="Rost B."/>
            <person name="Ruan Y."/>
            <person name="Salzberg S.L."/>
            <person name="Sandelin A."/>
            <person name="Schneider C."/>
            <person name="Schoenbach C."/>
            <person name="Sekiguchi K."/>
            <person name="Semple C.A."/>
            <person name="Seno S."/>
            <person name="Sessa L."/>
            <person name="Sheng Y."/>
            <person name="Shibata Y."/>
            <person name="Shimada H."/>
            <person name="Shimada K."/>
            <person name="Silva D."/>
            <person name="Sinclair B."/>
            <person name="Sperling S."/>
            <person name="Stupka E."/>
            <person name="Sugiura K."/>
            <person name="Sultana R."/>
            <person name="Takenaka Y."/>
            <person name="Taki K."/>
            <person name="Tammoja K."/>
            <person name="Tan S.L."/>
            <person name="Tang S."/>
            <person name="Taylor M.S."/>
            <person name="Tegner J."/>
            <person name="Teichmann S.A."/>
            <person name="Ueda H.R."/>
            <person name="van Nimwegen E."/>
            <person name="Verardo R."/>
            <person name="Wei C.L."/>
            <person name="Yagi K."/>
            <person name="Yamanishi H."/>
            <person name="Zabarovsky E."/>
            <person name="Zhu S."/>
            <person name="Zimmer A."/>
            <person name="Hide W."/>
            <person name="Bult C."/>
            <person name="Grimmond S.M."/>
            <person name="Teasdale R.D."/>
            <person name="Liu E.T."/>
            <person name="Brusic V."/>
            <person name="Quackenbush J."/>
            <person name="Wahlestedt C."/>
            <person name="Mattick J.S."/>
            <person name="Hume D.A."/>
            <person name="Kai C."/>
            <person name="Sasaki D."/>
            <person name="Tomaru Y."/>
            <person name="Fukuda S."/>
            <person name="Kanamori-Katayama M."/>
            <person name="Suzuki M."/>
            <person name="Aoki J."/>
            <person name="Arakawa T."/>
            <person name="Iida J."/>
            <person name="Imamura K."/>
            <person name="Itoh M."/>
            <person name="Kato T."/>
            <person name="Kawaji H."/>
            <person name="Kawagashira N."/>
            <person name="Kawashima T."/>
            <person name="Kojima M."/>
            <person name="Kondo S."/>
            <person name="Konno H."/>
            <person name="Nakano K."/>
            <person name="Ninomiya N."/>
            <person name="Nishio T."/>
            <person name="Okada M."/>
            <person name="Plessy C."/>
            <person name="Shibata K."/>
            <person name="Shiraki T."/>
            <person name="Suzuki S."/>
            <person name="Tagami M."/>
            <person name="Waki K."/>
            <person name="Watahiki A."/>
            <person name="Okamura-Oho Y."/>
            <person name="Suzuki H."/>
            <person name="Kawai J."/>
            <person name="Hayashizaki Y."/>
        </authorList>
    </citation>
    <scope>NUCLEOTIDE SEQUENCE [LARGE SCALE MRNA]</scope>
    <source>
        <strain>C57BL/6J</strain>
        <tissue>Thymus</tissue>
    </source>
</reference>
<reference key="5">
    <citation type="submission" date="2005-07" db="EMBL/GenBank/DDBJ databases">
        <authorList>
            <person name="Mural R.J."/>
            <person name="Adams M.D."/>
            <person name="Myers E.W."/>
            <person name="Smith H.O."/>
            <person name="Venter J.C."/>
        </authorList>
    </citation>
    <scope>NUCLEOTIDE SEQUENCE [LARGE SCALE GENOMIC DNA]</scope>
</reference>
<reference key="6">
    <citation type="journal article" date="2004" name="Genome Res.">
        <title>The status, quality, and expansion of the NIH full-length cDNA project: the Mammalian Gene Collection (MGC).</title>
        <authorList>
            <consortium name="The MGC Project Team"/>
        </authorList>
    </citation>
    <scope>NUCLEOTIDE SEQUENCE [LARGE SCALE MRNA]</scope>
    <source>
        <strain>C57BL/6J</strain>
        <tissue>Brain</tissue>
    </source>
</reference>
<reference key="7">
    <citation type="journal article" date="1996" name="Proc. Natl. Acad. Sci. U.S.A.">
        <title>Homologs of the Xenopus developmental gene DG42 are present in zebrafish and mouse and are involved in the synthesis of Nod-like chitin oligosaccharides during early embryogenesis.</title>
        <authorList>
            <person name="Semino C.E."/>
            <person name="Specht C.A."/>
            <person name="Raimondi A."/>
            <person name="Robbins P.W."/>
        </authorList>
    </citation>
    <scope>NUCLEOTIDE SEQUENCE [GENOMIC DNA] OF 215-348</scope>
    <source>
        <strain>Swiss Webster</strain>
        <tissue>Embryo</tissue>
    </source>
</reference>
<reference key="8">
    <citation type="journal article" date="1999" name="J. Biol. Chem.">
        <title>Three isoforms of mammalian hyaluronan synthases have distinct enzymatic properties.</title>
        <authorList>
            <person name="Itano N."/>
            <person name="Sawai T."/>
            <person name="Yoshida M."/>
            <person name="Lenas P."/>
            <person name="Yamada Y."/>
            <person name="Imagawa M."/>
            <person name="Shinomura T."/>
            <person name="Hamaguchi M."/>
            <person name="Yoshida Y."/>
            <person name="Ohnuki Y."/>
            <person name="Miyauchi S."/>
            <person name="Spicer A.P."/>
            <person name="McDonald J.A."/>
            <person name="Kimata K."/>
        </authorList>
    </citation>
    <scope>FUNCTION</scope>
    <scope>CATALYTIC ACTIVITY</scope>
    <scope>BIOPHYSICOCHEMICAL PROPERTIES</scope>
</reference>
<reference key="9">
    <citation type="journal article" date="2000" name="J. Clin. Invest.">
        <title>Disruption of hyaluronan synthase-2 abrogates normal cardiac morphogenesis and hyaluronan-mediated transformation of epithelium to mesenchyme.</title>
        <authorList>
            <person name="Camenisch T.D."/>
            <person name="Spicer A.P."/>
            <person name="Brehm-Gibson T."/>
            <person name="Biesterfeldt J."/>
            <person name="Augustine M.L."/>
            <person name="Calabro A. Jr."/>
            <person name="Kubalak S."/>
            <person name="Klewer S.E."/>
            <person name="McDonald J.A."/>
        </authorList>
    </citation>
    <scope>FUNCTION</scope>
    <scope>DISRUPTION PHENOTYPE</scope>
    <scope>DEVELOPMENTAL STAGE</scope>
</reference>
<evidence type="ECO:0000250" key="1">
    <source>
        <dbReference type="UniProtKB" id="Q92819"/>
    </source>
</evidence>
<evidence type="ECO:0000255" key="2"/>
<evidence type="ECO:0000269" key="3">
    <source>
    </source>
</evidence>
<evidence type="ECO:0000269" key="4">
    <source>
    </source>
</evidence>
<evidence type="ECO:0000269" key="5">
    <source>
    </source>
</evidence>
<evidence type="ECO:0000305" key="6"/>
<evidence type="ECO:0000305" key="7">
    <source>
    </source>
</evidence>
<evidence type="ECO:0000312" key="8">
    <source>
        <dbReference type="MGI" id="MGI:107821"/>
    </source>
</evidence>
<dbReference type="EC" id="2.4.1.212" evidence="3"/>
<dbReference type="EMBL" id="U52524">
    <property type="protein sequence ID" value="AAC53309.2"/>
    <property type="molecule type" value="mRNA"/>
</dbReference>
<dbReference type="EMBL" id="U69695">
    <property type="protein sequence ID" value="AAB17609.1"/>
    <property type="molecule type" value="mRNA"/>
</dbReference>
<dbReference type="EMBL" id="AK079729">
    <property type="protein sequence ID" value="BAC37733.1"/>
    <property type="molecule type" value="mRNA"/>
</dbReference>
<dbReference type="EMBL" id="CH466545">
    <property type="protein sequence ID" value="EDL29280.1"/>
    <property type="molecule type" value="Genomic_DNA"/>
</dbReference>
<dbReference type="EMBL" id="BC080281">
    <property type="protein sequence ID" value="AAH80281.1"/>
    <property type="molecule type" value="mRNA"/>
</dbReference>
<dbReference type="EMBL" id="U53222">
    <property type="protein sequence ID" value="AAC52651.1"/>
    <property type="molecule type" value="Genomic_DNA"/>
</dbReference>
<dbReference type="CCDS" id="CCDS27480.1"/>
<dbReference type="RefSeq" id="NP_032242.3">
    <property type="nucleotide sequence ID" value="NM_008216.3"/>
</dbReference>
<dbReference type="SMR" id="P70312"/>
<dbReference type="BioGRID" id="200210">
    <property type="interactions" value="2"/>
</dbReference>
<dbReference type="FunCoup" id="P70312">
    <property type="interactions" value="94"/>
</dbReference>
<dbReference type="STRING" id="10090.ENSMUSP00000062212"/>
<dbReference type="CAZy" id="GT2">
    <property type="family name" value="Glycosyltransferase Family 2"/>
</dbReference>
<dbReference type="GlyCosmos" id="P70312">
    <property type="glycosylation" value="1 site, No reported glycans"/>
</dbReference>
<dbReference type="GlyGen" id="P70312">
    <property type="glycosylation" value="1 site"/>
</dbReference>
<dbReference type="iPTMnet" id="P70312"/>
<dbReference type="PhosphoSitePlus" id="P70312"/>
<dbReference type="PaxDb" id="10090-ENSMUSP00000062212"/>
<dbReference type="ProteomicsDB" id="269513"/>
<dbReference type="Antibodypedia" id="55587">
    <property type="antibodies" value="164 antibodies from 24 providers"/>
</dbReference>
<dbReference type="DNASU" id="15117"/>
<dbReference type="Ensembl" id="ENSMUST00000050544.8">
    <property type="protein sequence ID" value="ENSMUSP00000062212.8"/>
    <property type="gene ID" value="ENSMUSG00000022367.8"/>
</dbReference>
<dbReference type="GeneID" id="15117"/>
<dbReference type="KEGG" id="mmu:15117"/>
<dbReference type="UCSC" id="uc007vsl.2">
    <property type="organism name" value="mouse"/>
</dbReference>
<dbReference type="AGR" id="MGI:107821"/>
<dbReference type="CTD" id="3037"/>
<dbReference type="MGI" id="MGI:107821">
    <property type="gene designation" value="Has2"/>
</dbReference>
<dbReference type="VEuPathDB" id="HostDB:ENSMUSG00000022367"/>
<dbReference type="eggNOG" id="KOG2571">
    <property type="taxonomic scope" value="Eukaryota"/>
</dbReference>
<dbReference type="GeneTree" id="ENSGT00390000010337"/>
<dbReference type="HOGENOM" id="CLU_029695_3_0_1"/>
<dbReference type="InParanoid" id="P70312"/>
<dbReference type="OMA" id="KSATYVW"/>
<dbReference type="OrthoDB" id="9876900at2759"/>
<dbReference type="PhylomeDB" id="P70312"/>
<dbReference type="TreeFam" id="TF332506"/>
<dbReference type="BRENDA" id="2.4.1.212">
    <property type="organism ID" value="3474"/>
</dbReference>
<dbReference type="Reactome" id="R-MMU-2142850">
    <property type="pathway name" value="Hyaluronan biosynthesis and export"/>
</dbReference>
<dbReference type="SABIO-RK" id="P70312"/>
<dbReference type="UniPathway" id="UPA00341"/>
<dbReference type="BioGRID-ORCS" id="15117">
    <property type="hits" value="0 hits in 80 CRISPR screens"/>
</dbReference>
<dbReference type="PRO" id="PR:P70312"/>
<dbReference type="Proteomes" id="UP000000589">
    <property type="component" value="Chromosome 15"/>
</dbReference>
<dbReference type="RNAct" id="P70312">
    <property type="molecule type" value="protein"/>
</dbReference>
<dbReference type="Bgee" id="ENSMUSG00000022367">
    <property type="expression patterns" value="Expressed in vas deferens and 138 other cell types or tissues"/>
</dbReference>
<dbReference type="GO" id="GO:0005737">
    <property type="term" value="C:cytoplasm"/>
    <property type="evidence" value="ECO:0000314"/>
    <property type="project" value="CACAO"/>
</dbReference>
<dbReference type="GO" id="GO:0031410">
    <property type="term" value="C:cytoplasmic vesicle"/>
    <property type="evidence" value="ECO:0000314"/>
    <property type="project" value="CACAO"/>
</dbReference>
<dbReference type="GO" id="GO:0005789">
    <property type="term" value="C:endoplasmic reticulum membrane"/>
    <property type="evidence" value="ECO:0007669"/>
    <property type="project" value="UniProtKB-SubCell"/>
</dbReference>
<dbReference type="GO" id="GO:1903561">
    <property type="term" value="C:extracellular vesicle"/>
    <property type="evidence" value="ECO:0000250"/>
    <property type="project" value="UniProtKB"/>
</dbReference>
<dbReference type="GO" id="GO:0005794">
    <property type="term" value="C:Golgi apparatus"/>
    <property type="evidence" value="ECO:0000250"/>
    <property type="project" value="UniProtKB"/>
</dbReference>
<dbReference type="GO" id="GO:0000139">
    <property type="term" value="C:Golgi membrane"/>
    <property type="evidence" value="ECO:0007669"/>
    <property type="project" value="UniProtKB-SubCell"/>
</dbReference>
<dbReference type="GO" id="GO:0005764">
    <property type="term" value="C:lysosome"/>
    <property type="evidence" value="ECO:0007669"/>
    <property type="project" value="UniProtKB-SubCell"/>
</dbReference>
<dbReference type="GO" id="GO:0005886">
    <property type="term" value="C:plasma membrane"/>
    <property type="evidence" value="ECO:0000314"/>
    <property type="project" value="MGI"/>
</dbReference>
<dbReference type="GO" id="GO:0044853">
    <property type="term" value="C:plasma membrane raft"/>
    <property type="evidence" value="ECO:0000314"/>
    <property type="project" value="MGI"/>
</dbReference>
<dbReference type="GO" id="GO:0050501">
    <property type="term" value="F:hyaluronan synthase activity"/>
    <property type="evidence" value="ECO:0000314"/>
    <property type="project" value="UniProtKB"/>
</dbReference>
<dbReference type="GO" id="GO:0042802">
    <property type="term" value="F:identical protein binding"/>
    <property type="evidence" value="ECO:0007669"/>
    <property type="project" value="Ensembl"/>
</dbReference>
<dbReference type="GO" id="GO:0036302">
    <property type="term" value="P:atrioventricular canal development"/>
    <property type="evidence" value="ECO:0000315"/>
    <property type="project" value="UniProtKB"/>
</dbReference>
<dbReference type="GO" id="GO:0060349">
    <property type="term" value="P:bone morphogenesis"/>
    <property type="evidence" value="ECO:0000315"/>
    <property type="project" value="MGI"/>
</dbReference>
<dbReference type="GO" id="GO:0071498">
    <property type="term" value="P:cellular response to fluid shear stress"/>
    <property type="evidence" value="ECO:0007669"/>
    <property type="project" value="Ensembl"/>
</dbReference>
<dbReference type="GO" id="GO:0071347">
    <property type="term" value="P:cellular response to interleukin-1"/>
    <property type="evidence" value="ECO:0007669"/>
    <property type="project" value="Ensembl"/>
</dbReference>
<dbReference type="GO" id="GO:0036120">
    <property type="term" value="P:cellular response to platelet-derived growth factor stimulus"/>
    <property type="evidence" value="ECO:0007669"/>
    <property type="project" value="Ensembl"/>
</dbReference>
<dbReference type="GO" id="GO:0071356">
    <property type="term" value="P:cellular response to tumor necrosis factor"/>
    <property type="evidence" value="ECO:0007669"/>
    <property type="project" value="Ensembl"/>
</dbReference>
<dbReference type="GO" id="GO:0090500">
    <property type="term" value="P:endocardial cushion to mesenchymal transition"/>
    <property type="evidence" value="ECO:0000315"/>
    <property type="project" value="UniProtKB"/>
</dbReference>
<dbReference type="GO" id="GO:0044849">
    <property type="term" value="P:estrous cycle"/>
    <property type="evidence" value="ECO:0007669"/>
    <property type="project" value="Ensembl"/>
</dbReference>
<dbReference type="GO" id="GO:0085029">
    <property type="term" value="P:extracellular matrix assembly"/>
    <property type="evidence" value="ECO:0000314"/>
    <property type="project" value="UniProtKB"/>
</dbReference>
<dbReference type="GO" id="GO:0030213">
    <property type="term" value="P:hyaluronan biosynthetic process"/>
    <property type="evidence" value="ECO:0000314"/>
    <property type="project" value="MGI"/>
</dbReference>
<dbReference type="GO" id="GO:0030212">
    <property type="term" value="P:hyaluronan metabolic process"/>
    <property type="evidence" value="ECO:0000315"/>
    <property type="project" value="MGI"/>
</dbReference>
<dbReference type="GO" id="GO:0001822">
    <property type="term" value="P:kidney development"/>
    <property type="evidence" value="ECO:0007669"/>
    <property type="project" value="Ensembl"/>
</dbReference>
<dbReference type="GO" id="GO:0000271">
    <property type="term" value="P:polysaccharide biosynthetic process"/>
    <property type="evidence" value="ECO:0000314"/>
    <property type="project" value="UniProtKB"/>
</dbReference>
<dbReference type="GO" id="GO:1900127">
    <property type="term" value="P:positive regulation of hyaluronan biosynthetic process"/>
    <property type="evidence" value="ECO:0007669"/>
    <property type="project" value="Ensembl"/>
</dbReference>
<dbReference type="GO" id="GO:0051549">
    <property type="term" value="P:positive regulation of keratinocyte migration"/>
    <property type="evidence" value="ECO:0007669"/>
    <property type="project" value="Ensembl"/>
</dbReference>
<dbReference type="GO" id="GO:0010838">
    <property type="term" value="P:positive regulation of keratinocyte proliferation"/>
    <property type="evidence" value="ECO:0007669"/>
    <property type="project" value="Ensembl"/>
</dbReference>
<dbReference type="GO" id="GO:1900625">
    <property type="term" value="P:positive regulation of monocyte aggregation"/>
    <property type="evidence" value="ECO:0007669"/>
    <property type="project" value="Ensembl"/>
</dbReference>
<dbReference type="GO" id="GO:0014911">
    <property type="term" value="P:positive regulation of smooth muscle cell migration"/>
    <property type="evidence" value="ECO:0007669"/>
    <property type="project" value="Ensembl"/>
</dbReference>
<dbReference type="GO" id="GO:1900026">
    <property type="term" value="P:positive regulation of substrate adhesion-dependent cell spreading"/>
    <property type="evidence" value="ECO:0007669"/>
    <property type="project" value="Ensembl"/>
</dbReference>
<dbReference type="GO" id="GO:0035810">
    <property type="term" value="P:positive regulation of urine volume"/>
    <property type="evidence" value="ECO:0000250"/>
    <property type="project" value="UniProtKB"/>
</dbReference>
<dbReference type="GO" id="GO:1901201">
    <property type="term" value="P:regulation of extracellular matrix assembly"/>
    <property type="evidence" value="ECO:0007669"/>
    <property type="project" value="Ensembl"/>
</dbReference>
<dbReference type="GO" id="GO:0070295">
    <property type="term" value="P:renal water absorption"/>
    <property type="evidence" value="ECO:0000250"/>
    <property type="project" value="UniProtKB"/>
</dbReference>
<dbReference type="GO" id="GO:0001570">
    <property type="term" value="P:vasculogenesis"/>
    <property type="evidence" value="ECO:0000315"/>
    <property type="project" value="UniProtKB"/>
</dbReference>
<dbReference type="CDD" id="cd06434">
    <property type="entry name" value="GT2_HAS"/>
    <property type="match status" value="1"/>
</dbReference>
<dbReference type="Gene3D" id="3.90.550.10">
    <property type="entry name" value="Spore Coat Polysaccharide Biosynthesis Protein SpsA, Chain A"/>
    <property type="match status" value="1"/>
</dbReference>
<dbReference type="InterPro" id="IPR001173">
    <property type="entry name" value="Glyco_trans_2-like"/>
</dbReference>
<dbReference type="InterPro" id="IPR029044">
    <property type="entry name" value="Nucleotide-diphossugar_trans"/>
</dbReference>
<dbReference type="PANTHER" id="PTHR22913">
    <property type="entry name" value="HYALURONAN SYNTHASE"/>
    <property type="match status" value="1"/>
</dbReference>
<dbReference type="PANTHER" id="PTHR22913:SF7">
    <property type="entry name" value="HYALURONAN SYNTHASE 2"/>
    <property type="match status" value="1"/>
</dbReference>
<dbReference type="Pfam" id="PF03142">
    <property type="entry name" value="Chitin_synth_2"/>
    <property type="match status" value="1"/>
</dbReference>
<dbReference type="Pfam" id="PF00535">
    <property type="entry name" value="Glycos_transf_2"/>
    <property type="match status" value="1"/>
</dbReference>
<dbReference type="SUPFAM" id="SSF53448">
    <property type="entry name" value="Nucleotide-diphospho-sugar transferases"/>
    <property type="match status" value="1"/>
</dbReference>
<keyword id="KW-1003">Cell membrane</keyword>
<keyword id="KW-0256">Endoplasmic reticulum</keyword>
<keyword id="KW-0325">Glycoprotein</keyword>
<keyword id="KW-0328">Glycosyltransferase</keyword>
<keyword id="KW-0333">Golgi apparatus</keyword>
<keyword id="KW-1017">Isopeptide bond</keyword>
<keyword id="KW-0458">Lysosome</keyword>
<keyword id="KW-0472">Membrane</keyword>
<keyword id="KW-0597">Phosphoprotein</keyword>
<keyword id="KW-1185">Reference proteome</keyword>
<keyword id="KW-0808">Transferase</keyword>
<keyword id="KW-0812">Transmembrane</keyword>
<keyword id="KW-1133">Transmembrane helix</keyword>
<keyword id="KW-0832">Ubl conjugation</keyword>
<accession>P70312</accession>
<accession>P70411</accession>
<accession>Q62405</accession>
<accession>Q68EF7</accession>
<proteinExistence type="evidence at protein level"/>
<organism>
    <name type="scientific">Mus musculus</name>
    <name type="common">Mouse</name>
    <dbReference type="NCBI Taxonomy" id="10090"/>
    <lineage>
        <taxon>Eukaryota</taxon>
        <taxon>Metazoa</taxon>
        <taxon>Chordata</taxon>
        <taxon>Craniata</taxon>
        <taxon>Vertebrata</taxon>
        <taxon>Euteleostomi</taxon>
        <taxon>Mammalia</taxon>
        <taxon>Eutheria</taxon>
        <taxon>Euarchontoglires</taxon>
        <taxon>Glires</taxon>
        <taxon>Rodentia</taxon>
        <taxon>Myomorpha</taxon>
        <taxon>Muroidea</taxon>
        <taxon>Muridae</taxon>
        <taxon>Murinae</taxon>
        <taxon>Mus</taxon>
        <taxon>Mus</taxon>
    </lineage>
</organism>
<sequence length="552" mass="63510">MHCERFLCVLRIIGTTLFGVSLLLGITAAYIVGYQFIQTDNYYFSFGLYGAFLASHLIIQSLFAFLEHRKMKKSLETPIKLNKTVALCIAAYQEDPDYLRKCLQSVKRLTYPGIKVVMVIDGNSDDDLYMMDIFSEVMGRDKSATYIWKNNFHEKGPGETEESHKESSQHVTQLVLSNKSICIMQKWGGKREVMYTAFRALGRSVDYVQVCDSDTMLDPASSVEMVKVLEEDPMVGGVGGDVQILNKYDSWISFLSSVRYWMAFNIERACQSYFGCVQCISGPLGMYRNSLLHEFVEDWYNQEFMGNQCSFGDDRHLTNRVLSLGYATKYTARSKCLTETPIEYLRWLNQQTRWSKSYFREWLYNAMWFHKHHLWMTYEAVITGFFPFFLIATVIQLFYRGKIWNILLFLLTVQLVGLIKSSFASCLRGNIVMVFMSLYSVLYMSSLLPAKMFAIATINKAGWGTSGRKTIVVNFIGLIPVSVWFTILLGGVIFTIYKESKKPFSESKQTVLIVGTLIYACYWVMLLTLYVVLINKCGRRKKGQQYDMVLDV</sequence>
<gene>
    <name evidence="8" type="primary">Has2</name>
</gene>
<protein>
    <recommendedName>
        <fullName>Hyaluronan synthase 2</fullName>
        <ecNumber evidence="3">2.4.1.212</ecNumber>
    </recommendedName>
    <alternativeName>
        <fullName>Hyaluronate synthase 2</fullName>
    </alternativeName>
    <alternativeName>
        <fullName>Hyaluronic acid synthase 2</fullName>
        <shortName>HA synthase 2</shortName>
    </alternativeName>
</protein>